<gene>
    <name evidence="1" type="primary">queF</name>
    <name type="ordered locus">YE3295</name>
</gene>
<comment type="function">
    <text evidence="1">Catalyzes the NADPH-dependent reduction of 7-cyano-7-deazaguanine (preQ0) to 7-aminomethyl-7-deazaguanine (preQ1).</text>
</comment>
<comment type="catalytic activity">
    <reaction evidence="1">
        <text>7-aminomethyl-7-carbaguanine + 2 NADP(+) = 7-cyano-7-deazaguanine + 2 NADPH + 3 H(+)</text>
        <dbReference type="Rhea" id="RHEA:13409"/>
        <dbReference type="ChEBI" id="CHEBI:15378"/>
        <dbReference type="ChEBI" id="CHEBI:45075"/>
        <dbReference type="ChEBI" id="CHEBI:57783"/>
        <dbReference type="ChEBI" id="CHEBI:58349"/>
        <dbReference type="ChEBI" id="CHEBI:58703"/>
        <dbReference type="EC" id="1.7.1.13"/>
    </reaction>
</comment>
<comment type="pathway">
    <text evidence="1">tRNA modification; tRNA-queuosine biosynthesis.</text>
</comment>
<comment type="subunit">
    <text evidence="1">Homodimer.</text>
</comment>
<comment type="subcellular location">
    <subcellularLocation>
        <location evidence="1">Cytoplasm</location>
    </subcellularLocation>
</comment>
<comment type="similarity">
    <text evidence="1">Belongs to the GTP cyclohydrolase I family. QueF type 2 subfamily.</text>
</comment>
<dbReference type="EC" id="1.7.1.13" evidence="1"/>
<dbReference type="EMBL" id="AM286415">
    <property type="protein sequence ID" value="CAL13325.1"/>
    <property type="molecule type" value="Genomic_DNA"/>
</dbReference>
<dbReference type="RefSeq" id="WP_005173240.1">
    <property type="nucleotide sequence ID" value="NC_008800.1"/>
</dbReference>
<dbReference type="RefSeq" id="YP_001007469.1">
    <property type="nucleotide sequence ID" value="NC_008800.1"/>
</dbReference>
<dbReference type="SMR" id="A1JP94"/>
<dbReference type="KEGG" id="yen:YE3295"/>
<dbReference type="PATRIC" id="fig|393305.7.peg.3505"/>
<dbReference type="eggNOG" id="COG0780">
    <property type="taxonomic scope" value="Bacteria"/>
</dbReference>
<dbReference type="eggNOG" id="COG2904">
    <property type="taxonomic scope" value="Bacteria"/>
</dbReference>
<dbReference type="HOGENOM" id="CLU_054738_0_0_6"/>
<dbReference type="OrthoDB" id="9789995at2"/>
<dbReference type="UniPathway" id="UPA00392"/>
<dbReference type="Proteomes" id="UP000000642">
    <property type="component" value="Chromosome"/>
</dbReference>
<dbReference type="GO" id="GO:0005737">
    <property type="term" value="C:cytoplasm"/>
    <property type="evidence" value="ECO:0007669"/>
    <property type="project" value="UniProtKB-SubCell"/>
</dbReference>
<dbReference type="GO" id="GO:0033739">
    <property type="term" value="F:preQ1 synthase activity"/>
    <property type="evidence" value="ECO:0007669"/>
    <property type="project" value="UniProtKB-UniRule"/>
</dbReference>
<dbReference type="GO" id="GO:0008616">
    <property type="term" value="P:queuosine biosynthetic process"/>
    <property type="evidence" value="ECO:0007669"/>
    <property type="project" value="UniProtKB-UniRule"/>
</dbReference>
<dbReference type="GO" id="GO:0006400">
    <property type="term" value="P:tRNA modification"/>
    <property type="evidence" value="ECO:0007669"/>
    <property type="project" value="UniProtKB-UniRule"/>
</dbReference>
<dbReference type="Gene3D" id="3.30.1130.10">
    <property type="match status" value="2"/>
</dbReference>
<dbReference type="HAMAP" id="MF_00817">
    <property type="entry name" value="QueF_type2"/>
    <property type="match status" value="1"/>
</dbReference>
<dbReference type="InterPro" id="IPR043133">
    <property type="entry name" value="GTP-CH-I_C/QueF"/>
</dbReference>
<dbReference type="InterPro" id="IPR050084">
    <property type="entry name" value="NADPH_dep_7-cyano-7-deazaG_red"/>
</dbReference>
<dbReference type="InterPro" id="IPR029500">
    <property type="entry name" value="QueF"/>
</dbReference>
<dbReference type="InterPro" id="IPR029139">
    <property type="entry name" value="QueF_N"/>
</dbReference>
<dbReference type="InterPro" id="IPR016428">
    <property type="entry name" value="QueF_type2"/>
</dbReference>
<dbReference type="NCBIfam" id="TIGR03138">
    <property type="entry name" value="QueF"/>
    <property type="match status" value="1"/>
</dbReference>
<dbReference type="PANTHER" id="PTHR34354">
    <property type="entry name" value="NADPH-DEPENDENT 7-CYANO-7-DEAZAGUANINE REDUCTASE"/>
    <property type="match status" value="1"/>
</dbReference>
<dbReference type="PANTHER" id="PTHR34354:SF1">
    <property type="entry name" value="NADPH-DEPENDENT 7-CYANO-7-DEAZAGUANINE REDUCTASE"/>
    <property type="match status" value="1"/>
</dbReference>
<dbReference type="Pfam" id="PF14489">
    <property type="entry name" value="QueF"/>
    <property type="match status" value="1"/>
</dbReference>
<dbReference type="Pfam" id="PF14819">
    <property type="entry name" value="QueF_N"/>
    <property type="match status" value="1"/>
</dbReference>
<dbReference type="PIRSF" id="PIRSF004750">
    <property type="entry name" value="Nitrile_oxidored_YqcD_prd"/>
    <property type="match status" value="1"/>
</dbReference>
<dbReference type="SUPFAM" id="SSF55620">
    <property type="entry name" value="Tetrahydrobiopterin biosynthesis enzymes-like"/>
    <property type="match status" value="1"/>
</dbReference>
<accession>A1JP94</accession>
<name>QUEF_YERE8</name>
<proteinExistence type="inferred from homology"/>
<sequence length="281" mass="32183">MSSYQDHKALAELTLGKPTAYCDHYDVTLLQAVPRSMNREPLGLYPDNLPFHGADIWTLYELSWLNSKGLPQVAIGEISLNADSVNLIESKSFKLYLNSFNQTVFTDWESVRTTLQQDLSACAQGEVSITLYRLDEMTHQPIANFSGECLDEQDLYIDSYEFNADYLQGAAGKNRVTESLVSHLLKSNCLITHQPDWGSVQISYSGPQINREALLRYLISFRHHNEFHEQCVERIFNDIMRFCQPETLSVYARYTRRGGLDINPWRSNTDFVPLTGRLARQ</sequence>
<reference key="1">
    <citation type="journal article" date="2006" name="PLoS Genet.">
        <title>The complete genome sequence and comparative genome analysis of the high pathogenicity Yersinia enterocolitica strain 8081.</title>
        <authorList>
            <person name="Thomson N.R."/>
            <person name="Howard S."/>
            <person name="Wren B.W."/>
            <person name="Holden M.T.G."/>
            <person name="Crossman L."/>
            <person name="Challis G.L."/>
            <person name="Churcher C."/>
            <person name="Mungall K."/>
            <person name="Brooks K."/>
            <person name="Chillingworth T."/>
            <person name="Feltwell T."/>
            <person name="Abdellah Z."/>
            <person name="Hauser H."/>
            <person name="Jagels K."/>
            <person name="Maddison M."/>
            <person name="Moule S."/>
            <person name="Sanders M."/>
            <person name="Whitehead S."/>
            <person name="Quail M.A."/>
            <person name="Dougan G."/>
            <person name="Parkhill J."/>
            <person name="Prentice M.B."/>
        </authorList>
    </citation>
    <scope>NUCLEOTIDE SEQUENCE [LARGE SCALE GENOMIC DNA]</scope>
    <source>
        <strain>NCTC 13174 / 8081</strain>
    </source>
</reference>
<protein>
    <recommendedName>
        <fullName evidence="1">NADPH-dependent 7-cyano-7-deazaguanine reductase</fullName>
        <ecNumber evidence="1">1.7.1.13</ecNumber>
    </recommendedName>
    <alternativeName>
        <fullName evidence="1">7-cyano-7-carbaguanine reductase</fullName>
    </alternativeName>
    <alternativeName>
        <fullName evidence="1">NADPH-dependent nitrile oxidoreductase</fullName>
    </alternativeName>
    <alternativeName>
        <fullName evidence="1">PreQ(0) reductase</fullName>
    </alternativeName>
</protein>
<organism>
    <name type="scientific">Yersinia enterocolitica serotype O:8 / biotype 1B (strain NCTC 13174 / 8081)</name>
    <dbReference type="NCBI Taxonomy" id="393305"/>
    <lineage>
        <taxon>Bacteria</taxon>
        <taxon>Pseudomonadati</taxon>
        <taxon>Pseudomonadota</taxon>
        <taxon>Gammaproteobacteria</taxon>
        <taxon>Enterobacterales</taxon>
        <taxon>Yersiniaceae</taxon>
        <taxon>Yersinia</taxon>
    </lineage>
</organism>
<evidence type="ECO:0000255" key="1">
    <source>
        <dbReference type="HAMAP-Rule" id="MF_00817"/>
    </source>
</evidence>
<feature type="chain" id="PRO_1000062368" description="NADPH-dependent 7-cyano-7-deazaguanine reductase">
    <location>
        <begin position="1"/>
        <end position="281"/>
    </location>
</feature>
<feature type="active site" description="Thioimide intermediate" evidence="1">
    <location>
        <position position="189"/>
    </location>
</feature>
<feature type="active site" description="Proton donor" evidence="1">
    <location>
        <position position="196"/>
    </location>
</feature>
<feature type="binding site" evidence="1">
    <location>
        <begin position="88"/>
        <end position="90"/>
    </location>
    <ligand>
        <name>substrate</name>
    </ligand>
</feature>
<feature type="binding site" evidence="1">
    <location>
        <begin position="90"/>
        <end position="91"/>
    </location>
    <ligand>
        <name>NADPH</name>
        <dbReference type="ChEBI" id="CHEBI:57783"/>
    </ligand>
</feature>
<feature type="binding site" evidence="1">
    <location>
        <begin position="228"/>
        <end position="229"/>
    </location>
    <ligand>
        <name>substrate</name>
    </ligand>
</feature>
<feature type="binding site" evidence="1">
    <location>
        <begin position="257"/>
        <end position="258"/>
    </location>
    <ligand>
        <name>NADPH</name>
        <dbReference type="ChEBI" id="CHEBI:57783"/>
    </ligand>
</feature>
<keyword id="KW-0963">Cytoplasm</keyword>
<keyword id="KW-0521">NADP</keyword>
<keyword id="KW-0560">Oxidoreductase</keyword>
<keyword id="KW-0671">Queuosine biosynthesis</keyword>